<dbReference type="EMBL" id="BA000036">
    <property type="protein sequence ID" value="BAB98259.1"/>
    <property type="molecule type" value="Genomic_DNA"/>
</dbReference>
<dbReference type="EMBL" id="BX927150">
    <property type="protein sequence ID" value="CAF19571.1"/>
    <property type="molecule type" value="Genomic_DNA"/>
</dbReference>
<dbReference type="RefSeq" id="NP_600094.1">
    <property type="nucleotide sequence ID" value="NC_003450.3"/>
</dbReference>
<dbReference type="RefSeq" id="WP_003858407.1">
    <property type="nucleotide sequence ID" value="NC_006958.1"/>
</dbReference>
<dbReference type="SMR" id="P66455"/>
<dbReference type="STRING" id="196627.cg0988"/>
<dbReference type="GeneID" id="1018860"/>
<dbReference type="KEGG" id="cgb:cg0988"/>
<dbReference type="KEGG" id="cgl:Cgl0866"/>
<dbReference type="PATRIC" id="fig|196627.13.peg.850"/>
<dbReference type="eggNOG" id="COG0238">
    <property type="taxonomic scope" value="Bacteria"/>
</dbReference>
<dbReference type="HOGENOM" id="CLU_148710_1_0_11"/>
<dbReference type="OrthoDB" id="9812008at2"/>
<dbReference type="BioCyc" id="CORYNE:G18NG-10436-MONOMER"/>
<dbReference type="Proteomes" id="UP000000582">
    <property type="component" value="Chromosome"/>
</dbReference>
<dbReference type="Proteomes" id="UP000001009">
    <property type="component" value="Chromosome"/>
</dbReference>
<dbReference type="GO" id="GO:0022627">
    <property type="term" value="C:cytosolic small ribosomal subunit"/>
    <property type="evidence" value="ECO:0007669"/>
    <property type="project" value="TreeGrafter"/>
</dbReference>
<dbReference type="GO" id="GO:0070181">
    <property type="term" value="F:small ribosomal subunit rRNA binding"/>
    <property type="evidence" value="ECO:0007669"/>
    <property type="project" value="TreeGrafter"/>
</dbReference>
<dbReference type="GO" id="GO:0003735">
    <property type="term" value="F:structural constituent of ribosome"/>
    <property type="evidence" value="ECO:0007669"/>
    <property type="project" value="InterPro"/>
</dbReference>
<dbReference type="GO" id="GO:0006412">
    <property type="term" value="P:translation"/>
    <property type="evidence" value="ECO:0007669"/>
    <property type="project" value="UniProtKB-UniRule"/>
</dbReference>
<dbReference type="Gene3D" id="4.10.640.10">
    <property type="entry name" value="Ribosomal protein S18"/>
    <property type="match status" value="1"/>
</dbReference>
<dbReference type="HAMAP" id="MF_00270">
    <property type="entry name" value="Ribosomal_bS18"/>
    <property type="match status" value="1"/>
</dbReference>
<dbReference type="InterPro" id="IPR001648">
    <property type="entry name" value="Ribosomal_bS18"/>
</dbReference>
<dbReference type="InterPro" id="IPR018275">
    <property type="entry name" value="Ribosomal_bS18_CS"/>
</dbReference>
<dbReference type="InterPro" id="IPR036870">
    <property type="entry name" value="Ribosomal_bS18_sf"/>
</dbReference>
<dbReference type="NCBIfam" id="TIGR00165">
    <property type="entry name" value="S18"/>
    <property type="match status" value="1"/>
</dbReference>
<dbReference type="PANTHER" id="PTHR13479">
    <property type="entry name" value="30S RIBOSOMAL PROTEIN S18"/>
    <property type="match status" value="1"/>
</dbReference>
<dbReference type="PANTHER" id="PTHR13479:SF40">
    <property type="entry name" value="SMALL RIBOSOMAL SUBUNIT PROTEIN BS18M"/>
    <property type="match status" value="1"/>
</dbReference>
<dbReference type="Pfam" id="PF01084">
    <property type="entry name" value="Ribosomal_S18"/>
    <property type="match status" value="1"/>
</dbReference>
<dbReference type="PRINTS" id="PR00974">
    <property type="entry name" value="RIBOSOMALS18"/>
</dbReference>
<dbReference type="SUPFAM" id="SSF46911">
    <property type="entry name" value="Ribosomal protein S18"/>
    <property type="match status" value="1"/>
</dbReference>
<dbReference type="PROSITE" id="PS00057">
    <property type="entry name" value="RIBOSOMAL_S18"/>
    <property type="match status" value="1"/>
</dbReference>
<protein>
    <recommendedName>
        <fullName evidence="1">Small ribosomal subunit protein bS18</fullName>
    </recommendedName>
    <alternativeName>
        <fullName evidence="3">30S ribosomal protein S18</fullName>
    </alternativeName>
</protein>
<name>RS18_CORGL</name>
<evidence type="ECO:0000255" key="1">
    <source>
        <dbReference type="HAMAP-Rule" id="MF_00270"/>
    </source>
</evidence>
<evidence type="ECO:0000256" key="2">
    <source>
        <dbReference type="SAM" id="MobiDB-lite"/>
    </source>
</evidence>
<evidence type="ECO:0000305" key="3"/>
<gene>
    <name evidence="1" type="primary">rpsR</name>
    <name type="ordered locus">Cgl0866</name>
    <name type="ordered locus">cg0988</name>
</gene>
<organism>
    <name type="scientific">Corynebacterium glutamicum (strain ATCC 13032 / DSM 20300 / JCM 1318 / BCRC 11384 / CCUG 27702 / LMG 3730 / NBRC 12168 / NCIMB 10025 / NRRL B-2784 / 534)</name>
    <dbReference type="NCBI Taxonomy" id="196627"/>
    <lineage>
        <taxon>Bacteria</taxon>
        <taxon>Bacillati</taxon>
        <taxon>Actinomycetota</taxon>
        <taxon>Actinomycetes</taxon>
        <taxon>Mycobacteriales</taxon>
        <taxon>Corynebacteriaceae</taxon>
        <taxon>Corynebacterium</taxon>
    </lineage>
</organism>
<comment type="function">
    <text evidence="1">Binds as a heterodimer with protein bS6 to the central domain of the 16S rRNA, where it helps stabilize the platform of the 30S subunit.</text>
</comment>
<comment type="subunit">
    <text evidence="1">Part of the 30S ribosomal subunit. Forms a tight heterodimer with protein bS6.</text>
</comment>
<comment type="similarity">
    <text evidence="1">Belongs to the bacterial ribosomal protein bS18 family.</text>
</comment>
<proteinExistence type="inferred from homology"/>
<keyword id="KW-1185">Reference proteome</keyword>
<keyword id="KW-0687">Ribonucleoprotein</keyword>
<keyword id="KW-0689">Ribosomal protein</keyword>
<keyword id="KW-0694">RNA-binding</keyword>
<keyword id="KW-0699">rRNA-binding</keyword>
<sequence>MKQRNNAKRVRLEQTRRPKKNPLKAAGIEKVDYKDINTLRQFISDRHKIRSRRVTGLTPQQQREVATAVKNAREMALLPFTSR</sequence>
<accession>P66455</accession>
<accession>Q8NS18</accession>
<reference key="1">
    <citation type="journal article" date="2003" name="Appl. Microbiol. Biotechnol.">
        <title>The Corynebacterium glutamicum genome: features and impacts on biotechnological processes.</title>
        <authorList>
            <person name="Ikeda M."/>
            <person name="Nakagawa S."/>
        </authorList>
    </citation>
    <scope>NUCLEOTIDE SEQUENCE [LARGE SCALE GENOMIC DNA]</scope>
    <source>
        <strain>ATCC 13032 / DSM 20300 / JCM 1318 / BCRC 11384 / CCUG 27702 / LMG 3730 / NBRC 12168 / NCIMB 10025 / NRRL B-2784 / 534</strain>
    </source>
</reference>
<reference key="2">
    <citation type="journal article" date="2003" name="J. Biotechnol.">
        <title>The complete Corynebacterium glutamicum ATCC 13032 genome sequence and its impact on the production of L-aspartate-derived amino acids and vitamins.</title>
        <authorList>
            <person name="Kalinowski J."/>
            <person name="Bathe B."/>
            <person name="Bartels D."/>
            <person name="Bischoff N."/>
            <person name="Bott M."/>
            <person name="Burkovski A."/>
            <person name="Dusch N."/>
            <person name="Eggeling L."/>
            <person name="Eikmanns B.J."/>
            <person name="Gaigalat L."/>
            <person name="Goesmann A."/>
            <person name="Hartmann M."/>
            <person name="Huthmacher K."/>
            <person name="Kraemer R."/>
            <person name="Linke B."/>
            <person name="McHardy A.C."/>
            <person name="Meyer F."/>
            <person name="Moeckel B."/>
            <person name="Pfefferle W."/>
            <person name="Puehler A."/>
            <person name="Rey D.A."/>
            <person name="Rueckert C."/>
            <person name="Rupp O."/>
            <person name="Sahm H."/>
            <person name="Wendisch V.F."/>
            <person name="Wiegraebe I."/>
            <person name="Tauch A."/>
        </authorList>
    </citation>
    <scope>NUCLEOTIDE SEQUENCE [LARGE SCALE GENOMIC DNA]</scope>
    <source>
        <strain>ATCC 13032 / DSM 20300 / JCM 1318 / BCRC 11384 / CCUG 27702 / LMG 3730 / NBRC 12168 / NCIMB 10025 / NRRL B-2784 / 534</strain>
    </source>
</reference>
<feature type="chain" id="PRO_0000111148" description="Small ribosomal subunit protein bS18">
    <location>
        <begin position="1"/>
        <end position="83"/>
    </location>
</feature>
<feature type="region of interest" description="Disordered" evidence="2">
    <location>
        <begin position="1"/>
        <end position="23"/>
    </location>
</feature>